<name>KAD_RICTY</name>
<gene>
    <name evidence="1" type="primary">adk</name>
    <name type="ordered locus">RT0630</name>
</gene>
<reference key="1">
    <citation type="journal article" date="2004" name="J. Bacteriol.">
        <title>Complete genome sequence of Rickettsia typhi and comparison with sequences of other Rickettsiae.</title>
        <authorList>
            <person name="McLeod M.P."/>
            <person name="Qin X."/>
            <person name="Karpathy S.E."/>
            <person name="Gioia J."/>
            <person name="Highlander S.K."/>
            <person name="Fox G.E."/>
            <person name="McNeill T.Z."/>
            <person name="Jiang H."/>
            <person name="Muzny D."/>
            <person name="Jacob L.S."/>
            <person name="Hawes A.C."/>
            <person name="Sodergren E."/>
            <person name="Gill R."/>
            <person name="Hume J."/>
            <person name="Morgan M."/>
            <person name="Fan G."/>
            <person name="Amin A.G."/>
            <person name="Gibbs R.A."/>
            <person name="Hong C."/>
            <person name="Yu X.-J."/>
            <person name="Walker D.H."/>
            <person name="Weinstock G.M."/>
        </authorList>
    </citation>
    <scope>NUCLEOTIDE SEQUENCE [LARGE SCALE GENOMIC DNA]</scope>
    <source>
        <strain>ATCC VR-144 / Wilmington</strain>
    </source>
</reference>
<sequence>MIVIFLGPPGAGKGTQGKKIAKKIDLPHIAVGDIFRTIIKTSTSEAELINNYVKQGALIPNEIVNQVIKIFLLSSQYKNGYILDGYPRNLEQARFFESFIKKAQIKIIYFDVADELLIKRVLGRYSCKNCGKIYNVHFLQPKTDYVCDVCSSNVFDYRRDDNEEVIKKRIEVYKTETYPLIDYYKNSGNFYIVNASKDEQEIENDIQKILKIN</sequence>
<protein>
    <recommendedName>
        <fullName evidence="1">Adenylate kinase</fullName>
        <shortName evidence="1">AK</shortName>
        <ecNumber evidence="1">2.7.4.3</ecNumber>
    </recommendedName>
    <alternativeName>
        <fullName evidence="1">ATP-AMP transphosphorylase</fullName>
    </alternativeName>
    <alternativeName>
        <fullName evidence="1">ATP:AMP phosphotransferase</fullName>
    </alternativeName>
    <alternativeName>
        <fullName evidence="1">Adenylate monophosphate kinase</fullName>
    </alternativeName>
</protein>
<dbReference type="EC" id="2.7.4.3" evidence="1"/>
<dbReference type="EMBL" id="AE017197">
    <property type="protein sequence ID" value="AAU04093.1"/>
    <property type="molecule type" value="Genomic_DNA"/>
</dbReference>
<dbReference type="RefSeq" id="WP_011191072.1">
    <property type="nucleotide sequence ID" value="NC_006142.1"/>
</dbReference>
<dbReference type="SMR" id="Q68W99"/>
<dbReference type="KEGG" id="rty:RT0630"/>
<dbReference type="eggNOG" id="COG0563">
    <property type="taxonomic scope" value="Bacteria"/>
</dbReference>
<dbReference type="HOGENOM" id="CLU_032354_1_2_5"/>
<dbReference type="OrthoDB" id="9805030at2"/>
<dbReference type="UniPathway" id="UPA00588">
    <property type="reaction ID" value="UER00649"/>
</dbReference>
<dbReference type="Proteomes" id="UP000000604">
    <property type="component" value="Chromosome"/>
</dbReference>
<dbReference type="GO" id="GO:0005737">
    <property type="term" value="C:cytoplasm"/>
    <property type="evidence" value="ECO:0007669"/>
    <property type="project" value="UniProtKB-SubCell"/>
</dbReference>
<dbReference type="GO" id="GO:0004017">
    <property type="term" value="F:adenylate kinase activity"/>
    <property type="evidence" value="ECO:0007669"/>
    <property type="project" value="UniProtKB-UniRule"/>
</dbReference>
<dbReference type="GO" id="GO:0005524">
    <property type="term" value="F:ATP binding"/>
    <property type="evidence" value="ECO:0007669"/>
    <property type="project" value="UniProtKB-UniRule"/>
</dbReference>
<dbReference type="GO" id="GO:0008270">
    <property type="term" value="F:zinc ion binding"/>
    <property type="evidence" value="ECO:0007669"/>
    <property type="project" value="UniProtKB-UniRule"/>
</dbReference>
<dbReference type="GO" id="GO:0044209">
    <property type="term" value="P:AMP salvage"/>
    <property type="evidence" value="ECO:0007669"/>
    <property type="project" value="UniProtKB-UniRule"/>
</dbReference>
<dbReference type="CDD" id="cd01428">
    <property type="entry name" value="ADK"/>
    <property type="match status" value="1"/>
</dbReference>
<dbReference type="Gene3D" id="3.40.50.300">
    <property type="entry name" value="P-loop containing nucleotide triphosphate hydrolases"/>
    <property type="match status" value="1"/>
</dbReference>
<dbReference type="HAMAP" id="MF_00235">
    <property type="entry name" value="Adenylate_kinase_Adk"/>
    <property type="match status" value="1"/>
</dbReference>
<dbReference type="InterPro" id="IPR006259">
    <property type="entry name" value="Adenyl_kin_sub"/>
</dbReference>
<dbReference type="InterPro" id="IPR000850">
    <property type="entry name" value="Adenylat/UMP-CMP_kin"/>
</dbReference>
<dbReference type="InterPro" id="IPR033690">
    <property type="entry name" value="Adenylat_kinase_CS"/>
</dbReference>
<dbReference type="InterPro" id="IPR007862">
    <property type="entry name" value="Adenylate_kinase_lid-dom"/>
</dbReference>
<dbReference type="InterPro" id="IPR027417">
    <property type="entry name" value="P-loop_NTPase"/>
</dbReference>
<dbReference type="NCBIfam" id="TIGR01351">
    <property type="entry name" value="adk"/>
    <property type="match status" value="1"/>
</dbReference>
<dbReference type="NCBIfam" id="NF001383">
    <property type="entry name" value="PRK00279.2-1"/>
    <property type="match status" value="1"/>
</dbReference>
<dbReference type="PANTHER" id="PTHR23359">
    <property type="entry name" value="NUCLEOTIDE KINASE"/>
    <property type="match status" value="1"/>
</dbReference>
<dbReference type="Pfam" id="PF00406">
    <property type="entry name" value="ADK"/>
    <property type="match status" value="1"/>
</dbReference>
<dbReference type="Pfam" id="PF05191">
    <property type="entry name" value="ADK_lid"/>
    <property type="match status" value="1"/>
</dbReference>
<dbReference type="PRINTS" id="PR00094">
    <property type="entry name" value="ADENYLTKNASE"/>
</dbReference>
<dbReference type="SUPFAM" id="SSF52540">
    <property type="entry name" value="P-loop containing nucleoside triphosphate hydrolases"/>
    <property type="match status" value="1"/>
</dbReference>
<dbReference type="PROSITE" id="PS00113">
    <property type="entry name" value="ADENYLATE_KINASE"/>
    <property type="match status" value="1"/>
</dbReference>
<organism>
    <name type="scientific">Rickettsia typhi (strain ATCC VR-144 / Wilmington)</name>
    <dbReference type="NCBI Taxonomy" id="257363"/>
    <lineage>
        <taxon>Bacteria</taxon>
        <taxon>Pseudomonadati</taxon>
        <taxon>Pseudomonadota</taxon>
        <taxon>Alphaproteobacteria</taxon>
        <taxon>Rickettsiales</taxon>
        <taxon>Rickettsiaceae</taxon>
        <taxon>Rickettsieae</taxon>
        <taxon>Rickettsia</taxon>
        <taxon>typhus group</taxon>
    </lineage>
</organism>
<feature type="chain" id="PRO_0000158840" description="Adenylate kinase">
    <location>
        <begin position="1"/>
        <end position="213"/>
    </location>
</feature>
<feature type="region of interest" description="NMP" evidence="1">
    <location>
        <begin position="30"/>
        <end position="59"/>
    </location>
</feature>
<feature type="region of interest" description="LID" evidence="1">
    <location>
        <begin position="123"/>
        <end position="161"/>
    </location>
</feature>
<feature type="binding site" evidence="1">
    <location>
        <begin position="10"/>
        <end position="15"/>
    </location>
    <ligand>
        <name>ATP</name>
        <dbReference type="ChEBI" id="CHEBI:30616"/>
    </ligand>
</feature>
<feature type="binding site" evidence="1">
    <location>
        <position position="36"/>
    </location>
    <ligand>
        <name>AMP</name>
        <dbReference type="ChEBI" id="CHEBI:456215"/>
    </ligand>
</feature>
<feature type="binding site" evidence="1">
    <location>
        <begin position="57"/>
        <end position="59"/>
    </location>
    <ligand>
        <name>AMP</name>
        <dbReference type="ChEBI" id="CHEBI:456215"/>
    </ligand>
</feature>
<feature type="binding site" evidence="1">
    <location>
        <begin position="85"/>
        <end position="88"/>
    </location>
    <ligand>
        <name>AMP</name>
        <dbReference type="ChEBI" id="CHEBI:456215"/>
    </ligand>
</feature>
<feature type="binding site" evidence="1">
    <location>
        <position position="92"/>
    </location>
    <ligand>
        <name>AMP</name>
        <dbReference type="ChEBI" id="CHEBI:456215"/>
    </ligand>
</feature>
<feature type="binding site" evidence="1">
    <location>
        <position position="124"/>
    </location>
    <ligand>
        <name>ATP</name>
        <dbReference type="ChEBI" id="CHEBI:30616"/>
    </ligand>
</feature>
<feature type="binding site" evidence="1">
    <location>
        <position position="127"/>
    </location>
    <ligand>
        <name>Zn(2+)</name>
        <dbReference type="ChEBI" id="CHEBI:29105"/>
        <note>structural</note>
    </ligand>
</feature>
<feature type="binding site" evidence="1">
    <location>
        <position position="130"/>
    </location>
    <ligand>
        <name>Zn(2+)</name>
        <dbReference type="ChEBI" id="CHEBI:29105"/>
        <note>structural</note>
    </ligand>
</feature>
<feature type="binding site" evidence="1">
    <location>
        <begin position="133"/>
        <end position="134"/>
    </location>
    <ligand>
        <name>ATP</name>
        <dbReference type="ChEBI" id="CHEBI:30616"/>
    </ligand>
</feature>
<feature type="binding site" evidence="1">
    <location>
        <position position="147"/>
    </location>
    <ligand>
        <name>Zn(2+)</name>
        <dbReference type="ChEBI" id="CHEBI:29105"/>
        <note>structural</note>
    </ligand>
</feature>
<feature type="binding site" evidence="1">
    <location>
        <position position="150"/>
    </location>
    <ligand>
        <name>Zn(2+)</name>
        <dbReference type="ChEBI" id="CHEBI:29105"/>
        <note>structural</note>
    </ligand>
</feature>
<feature type="binding site" evidence="1">
    <location>
        <position position="158"/>
    </location>
    <ligand>
        <name>AMP</name>
        <dbReference type="ChEBI" id="CHEBI:456215"/>
    </ligand>
</feature>
<feature type="binding site" evidence="1">
    <location>
        <position position="169"/>
    </location>
    <ligand>
        <name>AMP</name>
        <dbReference type="ChEBI" id="CHEBI:456215"/>
    </ligand>
</feature>
<feature type="binding site" evidence="1">
    <location>
        <position position="197"/>
    </location>
    <ligand>
        <name>ATP</name>
        <dbReference type="ChEBI" id="CHEBI:30616"/>
    </ligand>
</feature>
<proteinExistence type="inferred from homology"/>
<keyword id="KW-0067">ATP-binding</keyword>
<keyword id="KW-0963">Cytoplasm</keyword>
<keyword id="KW-0418">Kinase</keyword>
<keyword id="KW-0479">Metal-binding</keyword>
<keyword id="KW-0545">Nucleotide biosynthesis</keyword>
<keyword id="KW-0547">Nucleotide-binding</keyword>
<keyword id="KW-0808">Transferase</keyword>
<keyword id="KW-0862">Zinc</keyword>
<accession>Q68W99</accession>
<comment type="function">
    <text evidence="1">Catalyzes the reversible transfer of the terminal phosphate group between ATP and AMP. Plays an important role in cellular energy homeostasis and in adenine nucleotide metabolism.</text>
</comment>
<comment type="catalytic activity">
    <reaction evidence="1">
        <text>AMP + ATP = 2 ADP</text>
        <dbReference type="Rhea" id="RHEA:12973"/>
        <dbReference type="ChEBI" id="CHEBI:30616"/>
        <dbReference type="ChEBI" id="CHEBI:456215"/>
        <dbReference type="ChEBI" id="CHEBI:456216"/>
        <dbReference type="EC" id="2.7.4.3"/>
    </reaction>
</comment>
<comment type="pathway">
    <text evidence="1">Purine metabolism; AMP biosynthesis via salvage pathway; AMP from ADP: step 1/1.</text>
</comment>
<comment type="subunit">
    <text evidence="1">Monomer.</text>
</comment>
<comment type="subcellular location">
    <subcellularLocation>
        <location evidence="1">Cytoplasm</location>
    </subcellularLocation>
</comment>
<comment type="domain">
    <text evidence="1">Consists of three domains, a large central CORE domain and two small peripheral domains, NMPbind and LID, which undergo movements during catalysis. The LID domain closes over the site of phosphoryl transfer upon ATP binding. Assembling and dissambling the active center during each catalytic cycle provides an effective means to prevent ATP hydrolysis. Some bacteria have evolved a zinc-coordinating structure that stabilizes the LID domain.</text>
</comment>
<comment type="similarity">
    <text evidence="1">Belongs to the adenylate kinase family.</text>
</comment>
<evidence type="ECO:0000255" key="1">
    <source>
        <dbReference type="HAMAP-Rule" id="MF_00235"/>
    </source>
</evidence>